<proteinExistence type="inferred from homology"/>
<organism>
    <name type="scientific">Mycoplasma genitalium (strain ATCC 33530 / DSM 19775 / NCTC 10195 / G37)</name>
    <name type="common">Mycoplasmoides genitalium</name>
    <dbReference type="NCBI Taxonomy" id="243273"/>
    <lineage>
        <taxon>Bacteria</taxon>
        <taxon>Bacillati</taxon>
        <taxon>Mycoplasmatota</taxon>
        <taxon>Mycoplasmoidales</taxon>
        <taxon>Mycoplasmoidaceae</taxon>
        <taxon>Mycoplasmoides</taxon>
    </lineage>
</organism>
<reference key="1">
    <citation type="journal article" date="1995" name="Science">
        <title>The minimal gene complement of Mycoplasma genitalium.</title>
        <authorList>
            <person name="Fraser C.M."/>
            <person name="Gocayne J.D."/>
            <person name="White O."/>
            <person name="Adams M.D."/>
            <person name="Clayton R.A."/>
            <person name="Fleischmann R.D."/>
            <person name="Bult C.J."/>
            <person name="Kerlavage A.R."/>
            <person name="Sutton G.G."/>
            <person name="Kelley J.M."/>
            <person name="Fritchman J.L."/>
            <person name="Weidman J.F."/>
            <person name="Small K.V."/>
            <person name="Sandusky M."/>
            <person name="Fuhrmann J.L."/>
            <person name="Nguyen D.T."/>
            <person name="Utterback T.R."/>
            <person name="Saudek D.M."/>
            <person name="Phillips C.A."/>
            <person name="Merrick J.M."/>
            <person name="Tomb J.-F."/>
            <person name="Dougherty B.A."/>
            <person name="Bott K.F."/>
            <person name="Hu P.-C."/>
            <person name="Lucier T.S."/>
            <person name="Peterson S.N."/>
            <person name="Smith H.O."/>
            <person name="Hutchison C.A. III"/>
            <person name="Venter J.C."/>
        </authorList>
    </citation>
    <scope>NUCLEOTIDE SEQUENCE [LARGE SCALE GENOMIC DNA]</scope>
    <source>
        <strain>ATCC 33530 / DSM 19775 / NCTC 10195 / G37</strain>
    </source>
</reference>
<keyword id="KW-0963">Cytoplasm</keyword>
<keyword id="KW-0489">Methyltransferase</keyword>
<keyword id="KW-1185">Reference proteome</keyword>
<keyword id="KW-0949">S-adenosyl-L-methionine</keyword>
<keyword id="KW-0808">Transferase</keyword>
<keyword id="KW-0819">tRNA processing</keyword>
<protein>
    <recommendedName>
        <fullName>Putative tRNA methyltransferase MG248</fullName>
        <ecNumber>2.1.1.-</ecNumber>
    </recommendedName>
</protein>
<feature type="chain" id="PRO_0000210487" description="Putative tRNA methyltransferase MG248">
    <location>
        <begin position="1"/>
        <end position="218"/>
    </location>
</feature>
<name>Y248_MYCGE</name>
<gene>
    <name type="ordered locus">MG248</name>
</gene>
<comment type="subcellular location">
    <subcellularLocation>
        <location evidence="1">Cytoplasm</location>
    </subcellularLocation>
</comment>
<comment type="similarity">
    <text evidence="1">Belongs to the TrmK family.</text>
</comment>
<evidence type="ECO:0000305" key="1"/>
<sequence>MKKRISTIANLVQSFNPKLVYDIGCDHSYLTSYLIKTNQNLTIVNSDISKNALLSNYQKFKNNNNIHFFVSDGFNNLPELNINPKIGVIAGLGGLKIINIISQKENFINRFVIQPQSNLIELRSFLSLNSWDIVNETLVQDREFIYPILVIEKLKKPFKLTKELVILGPKLINFKDKHCLMKHYQCLLRVYQPKQKPSLMDLKIIETLNKIITSYESS</sequence>
<dbReference type="EC" id="2.1.1.-"/>
<dbReference type="EMBL" id="L43967">
    <property type="protein sequence ID" value="AAC71468.1"/>
    <property type="molecule type" value="Genomic_DNA"/>
</dbReference>
<dbReference type="PIR" id="D64227">
    <property type="entry name" value="D64227"/>
</dbReference>
<dbReference type="RefSeq" id="WP_009885786.1">
    <property type="nucleotide sequence ID" value="NC_000908.2"/>
</dbReference>
<dbReference type="SMR" id="P47490"/>
<dbReference type="FunCoup" id="P47490">
    <property type="interactions" value="3"/>
</dbReference>
<dbReference type="STRING" id="243273.MG_248"/>
<dbReference type="GeneID" id="88282394"/>
<dbReference type="KEGG" id="mge:MG_248"/>
<dbReference type="eggNOG" id="COG2384">
    <property type="taxonomic scope" value="Bacteria"/>
</dbReference>
<dbReference type="HOGENOM" id="CLU_071037_2_1_14"/>
<dbReference type="InParanoid" id="P47490"/>
<dbReference type="OrthoDB" id="5881184at2"/>
<dbReference type="BioCyc" id="MGEN243273:G1GJ2-295-MONOMER"/>
<dbReference type="Proteomes" id="UP000000807">
    <property type="component" value="Chromosome"/>
</dbReference>
<dbReference type="GO" id="GO:0005737">
    <property type="term" value="C:cytoplasm"/>
    <property type="evidence" value="ECO:0007669"/>
    <property type="project" value="UniProtKB-SubCell"/>
</dbReference>
<dbReference type="GO" id="GO:0160105">
    <property type="term" value="F:tRNA (adenine(22)-N1)-methyltransferase activity"/>
    <property type="evidence" value="ECO:0007669"/>
    <property type="project" value="InterPro"/>
</dbReference>
<dbReference type="GO" id="GO:0032259">
    <property type="term" value="P:methylation"/>
    <property type="evidence" value="ECO:0007669"/>
    <property type="project" value="UniProtKB-KW"/>
</dbReference>
<dbReference type="GO" id="GO:0008033">
    <property type="term" value="P:tRNA processing"/>
    <property type="evidence" value="ECO:0007669"/>
    <property type="project" value="UniProtKB-KW"/>
</dbReference>
<dbReference type="FunFam" id="3.40.50.150:FF:000442">
    <property type="entry name" value="tRNA (Adenine22-N1)-methyltransferase TrmK"/>
    <property type="match status" value="1"/>
</dbReference>
<dbReference type="Gene3D" id="3.40.50.150">
    <property type="entry name" value="Vaccinia Virus protein VP39"/>
    <property type="match status" value="1"/>
</dbReference>
<dbReference type="InterPro" id="IPR029063">
    <property type="entry name" value="SAM-dependent_MTases_sf"/>
</dbReference>
<dbReference type="InterPro" id="IPR006901">
    <property type="entry name" value="TrmK"/>
</dbReference>
<dbReference type="PANTHER" id="PTHR38451">
    <property type="entry name" value="TRNA (ADENINE(22)-N(1))-METHYLTRANSFERASE"/>
    <property type="match status" value="1"/>
</dbReference>
<dbReference type="PANTHER" id="PTHR38451:SF1">
    <property type="entry name" value="TRNA (ADENINE(22)-N(1))-METHYLTRANSFERASE"/>
    <property type="match status" value="1"/>
</dbReference>
<dbReference type="Pfam" id="PF04816">
    <property type="entry name" value="TrmK"/>
    <property type="match status" value="1"/>
</dbReference>
<dbReference type="SUPFAM" id="SSF53335">
    <property type="entry name" value="S-adenosyl-L-methionine-dependent methyltransferases"/>
    <property type="match status" value="1"/>
</dbReference>
<accession>P47490</accession>